<name>MCSB_EXISA</name>
<proteinExistence type="inferred from homology"/>
<accession>C4KZS5</accession>
<reference key="1">
    <citation type="journal article" date="2011" name="J. Bacteriol.">
        <title>Complete genome sequence of the Thermophilic Bacterium Exiguobacterium sp. AT1b.</title>
        <authorList>
            <person name="Vishnivetskaya T.A."/>
            <person name="Lucas S."/>
            <person name="Copeland A."/>
            <person name="Lapidus A."/>
            <person name="Glavina del Rio T."/>
            <person name="Dalin E."/>
            <person name="Tice H."/>
            <person name="Bruce D.C."/>
            <person name="Goodwin L.A."/>
            <person name="Pitluck S."/>
            <person name="Saunders E."/>
            <person name="Brettin T."/>
            <person name="Detter C."/>
            <person name="Han C."/>
            <person name="Larimer F."/>
            <person name="Land M.L."/>
            <person name="Hauser L.J."/>
            <person name="Kyrpides N.C."/>
            <person name="Ovchinnikova G."/>
            <person name="Kathariou S."/>
            <person name="Ramaley R.F."/>
            <person name="Rodrigues D.F."/>
            <person name="Hendrix C."/>
            <person name="Richardson P."/>
            <person name="Tiedje J.M."/>
        </authorList>
    </citation>
    <scope>NUCLEOTIDE SEQUENCE [LARGE SCALE GENOMIC DNA]</scope>
    <source>
        <strain>ATCC BAA-1283 / AT1b</strain>
    </source>
</reference>
<dbReference type="EC" id="2.7.14.1" evidence="1"/>
<dbReference type="EMBL" id="CP001615">
    <property type="protein sequence ID" value="ACQ70588.1"/>
    <property type="molecule type" value="Genomic_DNA"/>
</dbReference>
<dbReference type="RefSeq" id="WP_012727706.1">
    <property type="nucleotide sequence ID" value="NC_012673.1"/>
</dbReference>
<dbReference type="SMR" id="C4KZS5"/>
<dbReference type="STRING" id="360911.EAT1b_1662"/>
<dbReference type="KEGG" id="eat:EAT1b_1662"/>
<dbReference type="eggNOG" id="COG3869">
    <property type="taxonomic scope" value="Bacteria"/>
</dbReference>
<dbReference type="HOGENOM" id="CLU_066591_1_0_9"/>
<dbReference type="OrthoDB" id="9791353at2"/>
<dbReference type="Proteomes" id="UP000000716">
    <property type="component" value="Chromosome"/>
</dbReference>
<dbReference type="GO" id="GO:0005615">
    <property type="term" value="C:extracellular space"/>
    <property type="evidence" value="ECO:0007669"/>
    <property type="project" value="TreeGrafter"/>
</dbReference>
<dbReference type="GO" id="GO:0005524">
    <property type="term" value="F:ATP binding"/>
    <property type="evidence" value="ECO:0007669"/>
    <property type="project" value="UniProtKB-KW"/>
</dbReference>
<dbReference type="GO" id="GO:0004111">
    <property type="term" value="F:creatine kinase activity"/>
    <property type="evidence" value="ECO:0007669"/>
    <property type="project" value="InterPro"/>
</dbReference>
<dbReference type="GO" id="GO:0004672">
    <property type="term" value="F:protein kinase activity"/>
    <property type="evidence" value="ECO:0007669"/>
    <property type="project" value="UniProtKB-UniRule"/>
</dbReference>
<dbReference type="GO" id="GO:0046314">
    <property type="term" value="P:phosphocreatine biosynthetic process"/>
    <property type="evidence" value="ECO:0007669"/>
    <property type="project" value="InterPro"/>
</dbReference>
<dbReference type="CDD" id="cd07930">
    <property type="entry name" value="bacterial_phosphagen_kinase"/>
    <property type="match status" value="1"/>
</dbReference>
<dbReference type="Gene3D" id="3.30.590.10">
    <property type="entry name" value="Glutamine synthetase/guanido kinase, catalytic domain"/>
    <property type="match status" value="1"/>
</dbReference>
<dbReference type="HAMAP" id="MF_00602">
    <property type="entry name" value="Prot_Arg_kinase"/>
    <property type="match status" value="1"/>
</dbReference>
<dbReference type="InterPro" id="IPR023660">
    <property type="entry name" value="Arg_Kinase"/>
</dbReference>
<dbReference type="InterPro" id="IPR000749">
    <property type="entry name" value="ATP-guanido_PTrfase"/>
</dbReference>
<dbReference type="InterPro" id="IPR022415">
    <property type="entry name" value="ATP-guanido_PTrfase_AS"/>
</dbReference>
<dbReference type="InterPro" id="IPR022414">
    <property type="entry name" value="ATP-guanido_PTrfase_cat"/>
</dbReference>
<dbReference type="InterPro" id="IPR014746">
    <property type="entry name" value="Gln_synth/guanido_kin_cat_dom"/>
</dbReference>
<dbReference type="NCBIfam" id="NF002194">
    <property type="entry name" value="PRK01059.1-4"/>
    <property type="match status" value="1"/>
</dbReference>
<dbReference type="PANTHER" id="PTHR11547:SF38">
    <property type="entry name" value="ARGININE KINASE 1-RELATED"/>
    <property type="match status" value="1"/>
</dbReference>
<dbReference type="PANTHER" id="PTHR11547">
    <property type="entry name" value="ARGININE OR CREATINE KINASE"/>
    <property type="match status" value="1"/>
</dbReference>
<dbReference type="Pfam" id="PF00217">
    <property type="entry name" value="ATP-gua_Ptrans"/>
    <property type="match status" value="1"/>
</dbReference>
<dbReference type="SUPFAM" id="SSF55931">
    <property type="entry name" value="Glutamine synthetase/guanido kinase"/>
    <property type="match status" value="1"/>
</dbReference>
<dbReference type="PROSITE" id="PS00112">
    <property type="entry name" value="PHOSPHAGEN_KINASE"/>
    <property type="match status" value="1"/>
</dbReference>
<dbReference type="PROSITE" id="PS51510">
    <property type="entry name" value="PHOSPHAGEN_KINASE_C"/>
    <property type="match status" value="1"/>
</dbReference>
<organism>
    <name type="scientific">Exiguobacterium sp. (strain ATCC BAA-1283 / AT1b)</name>
    <dbReference type="NCBI Taxonomy" id="360911"/>
    <lineage>
        <taxon>Bacteria</taxon>
        <taxon>Bacillati</taxon>
        <taxon>Bacillota</taxon>
        <taxon>Bacilli</taxon>
        <taxon>Bacillales</taxon>
        <taxon>Bacillales Family XII. Incertae Sedis</taxon>
        <taxon>Exiguobacterium</taxon>
    </lineage>
</organism>
<keyword id="KW-0021">Allosteric enzyme</keyword>
<keyword id="KW-0067">ATP-binding</keyword>
<keyword id="KW-0418">Kinase</keyword>
<keyword id="KW-0547">Nucleotide-binding</keyword>
<keyword id="KW-0808">Transferase</keyword>
<comment type="function">
    <text evidence="1">Catalyzes the specific phosphorylation of arginine residues in proteins.</text>
</comment>
<comment type="catalytic activity">
    <reaction evidence="1">
        <text>L-arginyl-[protein] + ATP = N(omega)-phospho-L-arginyl-[protein] + ADP + H(+)</text>
        <dbReference type="Rhea" id="RHEA:43384"/>
        <dbReference type="Rhea" id="RHEA-COMP:10532"/>
        <dbReference type="Rhea" id="RHEA-COMP:10533"/>
        <dbReference type="ChEBI" id="CHEBI:15378"/>
        <dbReference type="ChEBI" id="CHEBI:29965"/>
        <dbReference type="ChEBI" id="CHEBI:30616"/>
        <dbReference type="ChEBI" id="CHEBI:83226"/>
        <dbReference type="ChEBI" id="CHEBI:456216"/>
        <dbReference type="EC" id="2.7.14.1"/>
    </reaction>
</comment>
<comment type="activity regulation">
    <text evidence="1">Appears to be allosterically activated by the binding of pArg-containing polypeptides to the pArg-binding pocket localized in the C-terminal domain of McsB.</text>
</comment>
<comment type="similarity">
    <text evidence="1">Belongs to the ATP:guanido phosphotransferase family.</text>
</comment>
<sequence length="347" mass="39508">METFLTHPLGPKMKERAKLDDLVVSTRIRLARNVKDTVFSPVLSKEGERQLCDRLEGRLRGLKGFEYLHMRDYDEVTRQALMEKHLISPAVAANEESAVFLSEDETISVLINEEDHLRIQTLLPGYQVKEAFELANQVDALCAESLSYAFDEQLGYLTTCPSNIGTGLRASVMLHLPGLTLTGRISPILRELRKLGYTIRGRYGEGSDAAGRLFQLSNQRTLGSHESQLLADFMEVTEQVIQAERHAREELIAHRQEELEDRFYRSYGILRYAKLLSSTEAIERLSDLHLASDLGILSDWSPPKFHELIVRLQSGFLQKHFGKTLSTQERDRERATLVRRTLDQGLV</sequence>
<gene>
    <name evidence="1" type="primary">mcsB</name>
    <name type="ordered locus">EAT1b_1662</name>
</gene>
<protein>
    <recommendedName>
        <fullName evidence="1">Protein-arginine kinase</fullName>
        <ecNumber evidence="1">2.7.14.1</ecNumber>
    </recommendedName>
</protein>
<evidence type="ECO:0000255" key="1">
    <source>
        <dbReference type="HAMAP-Rule" id="MF_00602"/>
    </source>
</evidence>
<feature type="chain" id="PRO_1000212217" description="Protein-arginine kinase">
    <location>
        <begin position="1"/>
        <end position="347"/>
    </location>
</feature>
<feature type="domain" description="Phosphagen kinase C-terminal" evidence="1">
    <location>
        <begin position="22"/>
        <end position="247"/>
    </location>
</feature>
<feature type="short sequence motif" description="RDXXRA motif of the pArg binding pocket involved in allosteric regulation" evidence="1">
    <location>
        <begin position="330"/>
        <end position="335"/>
    </location>
</feature>
<feature type="binding site" evidence="1">
    <location>
        <begin position="25"/>
        <end position="29"/>
    </location>
    <ligand>
        <name>ATP</name>
        <dbReference type="ChEBI" id="CHEBI:30616"/>
    </ligand>
</feature>
<feature type="binding site" evidence="1">
    <location>
        <position position="85"/>
    </location>
    <ligand>
        <name>ATP</name>
        <dbReference type="ChEBI" id="CHEBI:30616"/>
    </ligand>
</feature>
<feature type="binding site" evidence="1">
    <location>
        <position position="118"/>
    </location>
    <ligand>
        <name>ATP</name>
        <dbReference type="ChEBI" id="CHEBI:30616"/>
    </ligand>
</feature>
<feature type="binding site" evidence="1">
    <location>
        <begin position="169"/>
        <end position="173"/>
    </location>
    <ligand>
        <name>ATP</name>
        <dbReference type="ChEBI" id="CHEBI:30616"/>
    </ligand>
</feature>
<feature type="binding site" evidence="1">
    <location>
        <begin position="200"/>
        <end position="205"/>
    </location>
    <ligand>
        <name>ATP</name>
        <dbReference type="ChEBI" id="CHEBI:30616"/>
    </ligand>
</feature>